<sequence>MRILKSHPLLKIVNSYMIDSPQPANISYLWNFGSLLALCLGIQIVTGVTLAMHYTPSVLEAFNSVEHIMRDVNNGWLVRYLHANTASAFFFLVYLHIGRGLYYGSYKSPRTLTWAIGTVILIVMMATAFLGYVLPYGQMSLWGATVITNLMSAIPWIGQDIVEFIWGGFSVNNATLNRFFALHFLLPFVLAALALMHLIAMHDTVGSGNPLGISGNYDRLPFAPYFIFKDLVTIFIFFIVLSIFVFFMPNALGDSENYVMANPMQTPPAIVPEWYLLPFYAILRSIPNKLLGVIAMFSAILALMVMPITDLSKLRGVQFRPLSKVAFYIFVANFLVLMQIGAKHVETPFIELGQISTVLYFAHFFVIVPVVSLIENSLVELATKK</sequence>
<evidence type="ECO:0000250" key="1"/>
<evidence type="ECO:0000250" key="2">
    <source>
        <dbReference type="UniProtKB" id="P00157"/>
    </source>
</evidence>
<evidence type="ECO:0000250" key="3">
    <source>
        <dbReference type="UniProtKB" id="P00163"/>
    </source>
</evidence>
<evidence type="ECO:0000255" key="4">
    <source>
        <dbReference type="PROSITE-ProRule" id="PRU00967"/>
    </source>
</evidence>
<evidence type="ECO:0000255" key="5">
    <source>
        <dbReference type="PROSITE-ProRule" id="PRU00968"/>
    </source>
</evidence>
<dbReference type="EMBL" id="DQ178142">
    <property type="protein sequence ID" value="ABA19215.1"/>
    <property type="molecule type" value="Genomic_DNA"/>
</dbReference>
<dbReference type="EMBL" id="DQ217399">
    <property type="protein sequence ID" value="ABA62011.1"/>
    <property type="molecule type" value="Genomic_DNA"/>
</dbReference>
<dbReference type="RefSeq" id="YP_398767.1">
    <property type="nucleotide sequence ID" value="NC_007597.1"/>
</dbReference>
<dbReference type="SMR" id="Q3LTW2"/>
<dbReference type="GeneID" id="3772915"/>
<dbReference type="GO" id="GO:0005743">
    <property type="term" value="C:mitochondrial inner membrane"/>
    <property type="evidence" value="ECO:0007669"/>
    <property type="project" value="UniProtKB-SubCell"/>
</dbReference>
<dbReference type="GO" id="GO:0045275">
    <property type="term" value="C:respiratory chain complex III"/>
    <property type="evidence" value="ECO:0007669"/>
    <property type="project" value="InterPro"/>
</dbReference>
<dbReference type="GO" id="GO:0046872">
    <property type="term" value="F:metal ion binding"/>
    <property type="evidence" value="ECO:0007669"/>
    <property type="project" value="UniProtKB-KW"/>
</dbReference>
<dbReference type="GO" id="GO:0008121">
    <property type="term" value="F:ubiquinol-cytochrome-c reductase activity"/>
    <property type="evidence" value="ECO:0007669"/>
    <property type="project" value="InterPro"/>
</dbReference>
<dbReference type="GO" id="GO:0006122">
    <property type="term" value="P:mitochondrial electron transport, ubiquinol to cytochrome c"/>
    <property type="evidence" value="ECO:0007669"/>
    <property type="project" value="TreeGrafter"/>
</dbReference>
<dbReference type="CDD" id="cd00290">
    <property type="entry name" value="cytochrome_b_C"/>
    <property type="match status" value="1"/>
</dbReference>
<dbReference type="CDD" id="cd00284">
    <property type="entry name" value="Cytochrome_b_N"/>
    <property type="match status" value="1"/>
</dbReference>
<dbReference type="FunFam" id="1.20.810.10:FF:000002">
    <property type="entry name" value="Cytochrome b"/>
    <property type="match status" value="1"/>
</dbReference>
<dbReference type="Gene3D" id="1.20.810.10">
    <property type="entry name" value="Cytochrome Bc1 Complex, Chain C"/>
    <property type="match status" value="1"/>
</dbReference>
<dbReference type="InterPro" id="IPR005798">
    <property type="entry name" value="Cyt_b/b6_C"/>
</dbReference>
<dbReference type="InterPro" id="IPR036150">
    <property type="entry name" value="Cyt_b/b6_C_sf"/>
</dbReference>
<dbReference type="InterPro" id="IPR005797">
    <property type="entry name" value="Cyt_b/b6_N"/>
</dbReference>
<dbReference type="InterPro" id="IPR027387">
    <property type="entry name" value="Cytb/b6-like_sf"/>
</dbReference>
<dbReference type="InterPro" id="IPR030689">
    <property type="entry name" value="Cytochrome_b"/>
</dbReference>
<dbReference type="InterPro" id="IPR048260">
    <property type="entry name" value="Cytochrome_b_C_euk/bac"/>
</dbReference>
<dbReference type="InterPro" id="IPR048259">
    <property type="entry name" value="Cytochrome_b_N_euk/bac"/>
</dbReference>
<dbReference type="InterPro" id="IPR016174">
    <property type="entry name" value="Di-haem_cyt_TM"/>
</dbReference>
<dbReference type="PANTHER" id="PTHR19271">
    <property type="entry name" value="CYTOCHROME B"/>
    <property type="match status" value="1"/>
</dbReference>
<dbReference type="PANTHER" id="PTHR19271:SF16">
    <property type="entry name" value="CYTOCHROME B"/>
    <property type="match status" value="1"/>
</dbReference>
<dbReference type="Pfam" id="PF00032">
    <property type="entry name" value="Cytochrom_B_C"/>
    <property type="match status" value="1"/>
</dbReference>
<dbReference type="Pfam" id="PF00033">
    <property type="entry name" value="Cytochrome_B"/>
    <property type="match status" value="1"/>
</dbReference>
<dbReference type="PIRSF" id="PIRSF038885">
    <property type="entry name" value="COB"/>
    <property type="match status" value="1"/>
</dbReference>
<dbReference type="SUPFAM" id="SSF81648">
    <property type="entry name" value="a domain/subunit of cytochrome bc1 complex (Ubiquinol-cytochrome c reductase)"/>
    <property type="match status" value="1"/>
</dbReference>
<dbReference type="SUPFAM" id="SSF81342">
    <property type="entry name" value="Transmembrane di-heme cytochromes"/>
    <property type="match status" value="1"/>
</dbReference>
<dbReference type="PROSITE" id="PS51003">
    <property type="entry name" value="CYTB_CTER"/>
    <property type="match status" value="1"/>
</dbReference>
<dbReference type="PROSITE" id="PS51002">
    <property type="entry name" value="CYTB_NTER"/>
    <property type="match status" value="1"/>
</dbReference>
<comment type="function">
    <text evidence="3">Component of the ubiquinol-cytochrome c reductase complex (complex III or cytochrome b-c1 complex) that is part of the mitochondrial respiratory chain. The b-c1 complex mediates electron transfer from ubiquinol to cytochrome c. Contributes to the generation of a proton gradient across the mitochondrial membrane that is then used for ATP synthesis.</text>
</comment>
<comment type="cofactor">
    <cofactor evidence="3">
        <name>heme b</name>
        <dbReference type="ChEBI" id="CHEBI:60344"/>
    </cofactor>
    <text evidence="3">Binds 2 heme b groups non-covalently.</text>
</comment>
<comment type="subunit">
    <text evidence="3">Fungal cytochrome b-c1 complex contains 10 subunits; 3 respiratory subunits, 2 core proteins and 5 low-molecular weight proteins. Cytochrome b-c1 complex is a homodimer.</text>
</comment>
<comment type="subcellular location">
    <subcellularLocation>
        <location evidence="3">Mitochondrion inner membrane</location>
        <topology evidence="3">Multi-pass membrane protein</topology>
    </subcellularLocation>
</comment>
<comment type="miscellaneous">
    <text evidence="1">Heme 1 (or BL or b562) is low-potential and absorbs at about 562 nm, and heme 2 (or BH or b566) is high-potential and absorbs at about 566 nm.</text>
</comment>
<comment type="similarity">
    <text evidence="4 5">Belongs to the cytochrome b family.</text>
</comment>
<comment type="caution">
    <text evidence="3">The protein contains only eight transmembrane helices, not nine as predicted by bioinformatics tools.</text>
</comment>
<keyword id="KW-0249">Electron transport</keyword>
<keyword id="KW-0349">Heme</keyword>
<keyword id="KW-0408">Iron</keyword>
<keyword id="KW-0472">Membrane</keyword>
<keyword id="KW-0479">Metal-binding</keyword>
<keyword id="KW-0496">Mitochondrion</keyword>
<keyword id="KW-0999">Mitochondrion inner membrane</keyword>
<keyword id="KW-0679">Respiratory chain</keyword>
<keyword id="KW-0812">Transmembrane</keyword>
<keyword id="KW-1133">Transmembrane helix</keyword>
<keyword id="KW-0813">Transport</keyword>
<keyword id="KW-0830">Ubiquinone</keyword>
<geneLocation type="mitochondrion"/>
<name>CYB_ASPTU</name>
<reference key="1">
    <citation type="submission" date="2005-08" db="EMBL/GenBank/DDBJ databases">
        <title>Cytochrome b (cob) gene of Aspergillus tubingensis strain 0932 (mtDNA type 2b).</title>
        <authorList>
            <person name="Juhasz A."/>
            <person name="Hamari Z."/>
        </authorList>
    </citation>
    <scope>NUCLEOTIDE SEQUENCE [GENOMIC DNA]</scope>
    <source>
        <strain>0932</strain>
    </source>
</reference>
<reference key="2">
    <citation type="submission" date="2005-09" db="EMBL/GenBank/DDBJ databases">
        <authorList>
            <person name="Juhasz A."/>
            <person name="Hamari Z."/>
            <person name="Kevei F."/>
            <person name="Pfeiffer I."/>
        </authorList>
    </citation>
    <scope>NUCLEOTIDE SEQUENCE [GENOMIC DNA]</scope>
    <source>
        <strain>0932</strain>
    </source>
</reference>
<gene>
    <name type="primary">cob</name>
    <name type="synonym">cytB</name>
</gene>
<feature type="chain" id="PRO_0000061739" description="Cytochrome b">
    <location>
        <begin position="1"/>
        <end position="385"/>
    </location>
</feature>
<feature type="transmembrane region" description="Helical" evidence="3">
    <location>
        <begin position="32"/>
        <end position="52"/>
    </location>
</feature>
<feature type="transmembrane region" description="Helical" evidence="3">
    <location>
        <begin position="76"/>
        <end position="98"/>
    </location>
</feature>
<feature type="transmembrane region" description="Helical" evidence="3">
    <location>
        <begin position="113"/>
        <end position="133"/>
    </location>
</feature>
<feature type="transmembrane region" description="Helical" evidence="3">
    <location>
        <begin position="179"/>
        <end position="199"/>
    </location>
</feature>
<feature type="transmembrane region" description="Helical" evidence="3">
    <location>
        <begin position="226"/>
        <end position="246"/>
    </location>
</feature>
<feature type="transmembrane region" description="Helical" evidence="3">
    <location>
        <begin position="290"/>
        <end position="310"/>
    </location>
</feature>
<feature type="transmembrane region" description="Helical" evidence="3">
    <location>
        <begin position="322"/>
        <end position="342"/>
    </location>
</feature>
<feature type="transmembrane region" description="Helical" evidence="3">
    <location>
        <begin position="349"/>
        <end position="369"/>
    </location>
</feature>
<feature type="binding site" description="axial binding residue" evidence="5">
    <location>
        <position position="82"/>
    </location>
    <ligand>
        <name>heme b</name>
        <dbReference type="ChEBI" id="CHEBI:60344"/>
        <label>b562</label>
    </ligand>
    <ligandPart>
        <name>Fe</name>
        <dbReference type="ChEBI" id="CHEBI:18248"/>
    </ligandPart>
</feature>
<feature type="binding site" description="axial binding residue" evidence="5">
    <location>
        <position position="96"/>
    </location>
    <ligand>
        <name>heme b</name>
        <dbReference type="ChEBI" id="CHEBI:60344"/>
        <label>b566</label>
    </ligand>
    <ligandPart>
        <name>Fe</name>
        <dbReference type="ChEBI" id="CHEBI:18248"/>
    </ligandPart>
</feature>
<feature type="binding site" description="axial binding residue" evidence="5">
    <location>
        <position position="183"/>
    </location>
    <ligand>
        <name>heme b</name>
        <dbReference type="ChEBI" id="CHEBI:60344"/>
        <label>b562</label>
    </ligand>
    <ligandPart>
        <name>Fe</name>
        <dbReference type="ChEBI" id="CHEBI:18248"/>
    </ligandPart>
</feature>
<feature type="binding site" description="axial binding residue" evidence="5">
    <location>
        <position position="197"/>
    </location>
    <ligand>
        <name>heme b</name>
        <dbReference type="ChEBI" id="CHEBI:60344"/>
        <label>b566</label>
    </ligand>
    <ligandPart>
        <name>Fe</name>
        <dbReference type="ChEBI" id="CHEBI:18248"/>
    </ligandPart>
</feature>
<feature type="binding site" evidence="2">
    <location>
        <position position="202"/>
    </location>
    <ligand>
        <name>a ubiquinone</name>
        <dbReference type="ChEBI" id="CHEBI:16389"/>
    </ligand>
</feature>
<organism>
    <name type="scientific">Aspergillus tubingensis</name>
    <dbReference type="NCBI Taxonomy" id="5068"/>
    <lineage>
        <taxon>Eukaryota</taxon>
        <taxon>Fungi</taxon>
        <taxon>Dikarya</taxon>
        <taxon>Ascomycota</taxon>
        <taxon>Pezizomycotina</taxon>
        <taxon>Eurotiomycetes</taxon>
        <taxon>Eurotiomycetidae</taxon>
        <taxon>Eurotiales</taxon>
        <taxon>Aspergillaceae</taxon>
        <taxon>Aspergillus</taxon>
        <taxon>Aspergillus subgen. Circumdati</taxon>
    </lineage>
</organism>
<protein>
    <recommendedName>
        <fullName>Cytochrome b</fullName>
    </recommendedName>
    <alternativeName>
        <fullName>Complex III subunit 3</fullName>
    </alternativeName>
    <alternativeName>
        <fullName>Complex III subunit III</fullName>
    </alternativeName>
    <alternativeName>
        <fullName>Cytochrome b-c1 complex subunit 3</fullName>
    </alternativeName>
    <alternativeName>
        <fullName>Ubiquinol-cytochrome-c reductase complex cytochrome b subunit</fullName>
    </alternativeName>
</protein>
<proteinExistence type="inferred from homology"/>
<accession>Q3LTW2</accession>